<sequence length="190" mass="22038">MRIAILGGTYNPVHVGHMFLAKEIEHFLNVDKILFIPTHKPVHKCVENISVKDRIAMLKLAVQHENNMFIDECDIINGGITYTVDTIACIRNKYVHDDIYLVIGDDLFESFDSWKNPEKIIDSVNLVVVHRIYSERLVSRFKHTYIDNRIFSISSSEIRSRIEQGLPVDYLLPFDVLQYIKSNNLYVKGK</sequence>
<proteinExistence type="inferred from homology"/>
<reference key="1">
    <citation type="submission" date="2004-12" db="EMBL/GenBank/DDBJ databases">
        <title>The genome sequence of Borrelia hermsii and Borrelia turicatae: comparative analysis of two agents of endemic N. America relapsing fever.</title>
        <authorList>
            <person name="Porcella S.F."/>
            <person name="Raffel S.J."/>
            <person name="Schrumpf M.E."/>
            <person name="Montgomery B."/>
            <person name="Smith T."/>
            <person name="Schwan T.G."/>
        </authorList>
    </citation>
    <scope>NUCLEOTIDE SEQUENCE [LARGE SCALE GENOMIC DNA]</scope>
    <source>
        <strain>91E135</strain>
    </source>
</reference>
<dbReference type="EC" id="2.7.7.18" evidence="1"/>
<dbReference type="EMBL" id="CP000049">
    <property type="protein sequence ID" value="AAX18096.1"/>
    <property type="molecule type" value="Genomic_DNA"/>
</dbReference>
<dbReference type="RefSeq" id="WP_011772714.1">
    <property type="nucleotide sequence ID" value="NC_008710.1"/>
</dbReference>
<dbReference type="SMR" id="A1R0K5"/>
<dbReference type="KEGG" id="btu:BT0782"/>
<dbReference type="eggNOG" id="COG1057">
    <property type="taxonomic scope" value="Bacteria"/>
</dbReference>
<dbReference type="HOGENOM" id="CLU_069765_3_2_12"/>
<dbReference type="UniPathway" id="UPA00253">
    <property type="reaction ID" value="UER00332"/>
</dbReference>
<dbReference type="Proteomes" id="UP000001205">
    <property type="component" value="Chromosome"/>
</dbReference>
<dbReference type="GO" id="GO:0005524">
    <property type="term" value="F:ATP binding"/>
    <property type="evidence" value="ECO:0007669"/>
    <property type="project" value="UniProtKB-KW"/>
</dbReference>
<dbReference type="GO" id="GO:0004515">
    <property type="term" value="F:nicotinate-nucleotide adenylyltransferase activity"/>
    <property type="evidence" value="ECO:0007669"/>
    <property type="project" value="UniProtKB-UniRule"/>
</dbReference>
<dbReference type="GO" id="GO:0009435">
    <property type="term" value="P:NAD biosynthetic process"/>
    <property type="evidence" value="ECO:0007669"/>
    <property type="project" value="UniProtKB-UniRule"/>
</dbReference>
<dbReference type="CDD" id="cd02165">
    <property type="entry name" value="NMNAT"/>
    <property type="match status" value="1"/>
</dbReference>
<dbReference type="Gene3D" id="3.40.50.620">
    <property type="entry name" value="HUPs"/>
    <property type="match status" value="1"/>
</dbReference>
<dbReference type="HAMAP" id="MF_00244">
    <property type="entry name" value="NaMN_adenylyltr"/>
    <property type="match status" value="1"/>
</dbReference>
<dbReference type="InterPro" id="IPR004821">
    <property type="entry name" value="Cyt_trans-like"/>
</dbReference>
<dbReference type="InterPro" id="IPR005248">
    <property type="entry name" value="NadD/NMNAT"/>
</dbReference>
<dbReference type="InterPro" id="IPR014729">
    <property type="entry name" value="Rossmann-like_a/b/a_fold"/>
</dbReference>
<dbReference type="NCBIfam" id="TIGR00125">
    <property type="entry name" value="cyt_tran_rel"/>
    <property type="match status" value="1"/>
</dbReference>
<dbReference type="NCBIfam" id="TIGR00482">
    <property type="entry name" value="nicotinate (nicotinamide) nucleotide adenylyltransferase"/>
    <property type="match status" value="1"/>
</dbReference>
<dbReference type="NCBIfam" id="NF000840">
    <property type="entry name" value="PRK00071.1-3"/>
    <property type="match status" value="1"/>
</dbReference>
<dbReference type="PANTHER" id="PTHR39321">
    <property type="entry name" value="NICOTINATE-NUCLEOTIDE ADENYLYLTRANSFERASE-RELATED"/>
    <property type="match status" value="1"/>
</dbReference>
<dbReference type="PANTHER" id="PTHR39321:SF3">
    <property type="entry name" value="PHOSPHOPANTETHEINE ADENYLYLTRANSFERASE"/>
    <property type="match status" value="1"/>
</dbReference>
<dbReference type="Pfam" id="PF01467">
    <property type="entry name" value="CTP_transf_like"/>
    <property type="match status" value="1"/>
</dbReference>
<dbReference type="SUPFAM" id="SSF52374">
    <property type="entry name" value="Nucleotidylyl transferase"/>
    <property type="match status" value="1"/>
</dbReference>
<feature type="chain" id="PRO_1000125340" description="Probable nicotinate-nucleotide adenylyltransferase">
    <location>
        <begin position="1"/>
        <end position="190"/>
    </location>
</feature>
<gene>
    <name evidence="1" type="primary">nadD</name>
    <name type="ordered locus">BT0782</name>
</gene>
<evidence type="ECO:0000255" key="1">
    <source>
        <dbReference type="HAMAP-Rule" id="MF_00244"/>
    </source>
</evidence>
<accession>A1R0K5</accession>
<protein>
    <recommendedName>
        <fullName evidence="1">Probable nicotinate-nucleotide adenylyltransferase</fullName>
        <ecNumber evidence="1">2.7.7.18</ecNumber>
    </recommendedName>
    <alternativeName>
        <fullName evidence="1">Deamido-NAD(+) diphosphorylase</fullName>
    </alternativeName>
    <alternativeName>
        <fullName evidence="1">Deamido-NAD(+) pyrophosphorylase</fullName>
    </alternativeName>
    <alternativeName>
        <fullName evidence="1">Nicotinate mononucleotide adenylyltransferase</fullName>
        <shortName evidence="1">NaMN adenylyltransferase</shortName>
    </alternativeName>
</protein>
<name>NADD_BORT9</name>
<organism>
    <name type="scientific">Borrelia turicatae (strain 91E135)</name>
    <dbReference type="NCBI Taxonomy" id="314724"/>
    <lineage>
        <taxon>Bacteria</taxon>
        <taxon>Pseudomonadati</taxon>
        <taxon>Spirochaetota</taxon>
        <taxon>Spirochaetia</taxon>
        <taxon>Spirochaetales</taxon>
        <taxon>Borreliaceae</taxon>
        <taxon>Borrelia</taxon>
    </lineage>
</organism>
<keyword id="KW-0067">ATP-binding</keyword>
<keyword id="KW-0520">NAD</keyword>
<keyword id="KW-0547">Nucleotide-binding</keyword>
<keyword id="KW-0548">Nucleotidyltransferase</keyword>
<keyword id="KW-0662">Pyridine nucleotide biosynthesis</keyword>
<keyword id="KW-1185">Reference proteome</keyword>
<keyword id="KW-0808">Transferase</keyword>
<comment type="function">
    <text evidence="1">Catalyzes the reversible adenylation of nicotinate mononucleotide (NaMN) to nicotinic acid adenine dinucleotide (NaAD).</text>
</comment>
<comment type="catalytic activity">
    <reaction evidence="1">
        <text>nicotinate beta-D-ribonucleotide + ATP + H(+) = deamido-NAD(+) + diphosphate</text>
        <dbReference type="Rhea" id="RHEA:22860"/>
        <dbReference type="ChEBI" id="CHEBI:15378"/>
        <dbReference type="ChEBI" id="CHEBI:30616"/>
        <dbReference type="ChEBI" id="CHEBI:33019"/>
        <dbReference type="ChEBI" id="CHEBI:57502"/>
        <dbReference type="ChEBI" id="CHEBI:58437"/>
        <dbReference type="EC" id="2.7.7.18"/>
    </reaction>
</comment>
<comment type="pathway">
    <text evidence="1">Cofactor biosynthesis; NAD(+) biosynthesis; deamido-NAD(+) from nicotinate D-ribonucleotide: step 1/1.</text>
</comment>
<comment type="similarity">
    <text evidence="1">Belongs to the NadD family.</text>
</comment>